<dbReference type="EMBL" id="M62991">
    <property type="protein sequence ID" value="AAA63616.1"/>
    <property type="molecule type" value="mRNA"/>
</dbReference>
<dbReference type="PIR" id="E45509">
    <property type="entry name" value="E45509"/>
</dbReference>
<dbReference type="SMR" id="P22242"/>
<dbReference type="GO" id="GO:0071465">
    <property type="term" value="P:cellular response to desiccation"/>
    <property type="evidence" value="ECO:0000314"/>
    <property type="project" value="CAFA"/>
</dbReference>
<dbReference type="GO" id="GO:1902075">
    <property type="term" value="P:cellular response to salt"/>
    <property type="evidence" value="ECO:0000314"/>
    <property type="project" value="CAFA"/>
</dbReference>
<dbReference type="InterPro" id="IPR052965">
    <property type="entry name" value="Pigment-catalase-like"/>
</dbReference>
<dbReference type="PANTHER" id="PTHR31694">
    <property type="entry name" value="DESICCATION-LIKE PROTEIN"/>
    <property type="match status" value="1"/>
</dbReference>
<dbReference type="PANTHER" id="PTHR31694:SF12">
    <property type="entry name" value="DESICCATION-LIKE PROTEIN"/>
    <property type="match status" value="1"/>
</dbReference>
<dbReference type="Pfam" id="PF13668">
    <property type="entry name" value="Ferritin_2"/>
    <property type="match status" value="1"/>
</dbReference>
<name>DRPE_CRAPL</name>
<keyword id="KW-0732">Signal</keyword>
<keyword id="KW-0346">Stress response</keyword>
<evidence type="ECO:0000255" key="1"/>
<accession>P22242</accession>
<sequence>MAQQPTFASAALVSFFLALICSCSYAAWHHEKDDIPKSDVSLLEFPLNLELLEAEFFAWAAFGKGIDELEPELAKGGPSPIGVQKANLSPFIRDIIAQFAYQEFGHVRAIQSSVEGFPRPLLDLSAKSFATVMDSAFGKTLKPPFDPYANDINYLLACYVVPYVGLTGYVGANPKLESPVSRKLVAGLLAVEAGQDAIIRALLYERATDKVEPYGITVAEFTNKISELRNKLGDKGVKDLGLIVEPELGAEGKISGNVLAGDKNSLAFPRTPERCLGSCTAAAMRPSPAAFIPKAPTGKSPSLIWRIRAFSIV</sequence>
<proteinExistence type="evidence at transcript level"/>
<comment type="induction">
    <text>By desiccation (leaves) and by abscisic acid (ABA) (leaves and callus).</text>
</comment>
<organism>
    <name type="scientific">Craterostigma plantagineum</name>
    <name type="common">Blue gem</name>
    <name type="synonym">Torenia plantagineum</name>
    <dbReference type="NCBI Taxonomy" id="4153"/>
    <lineage>
        <taxon>Eukaryota</taxon>
        <taxon>Viridiplantae</taxon>
        <taxon>Streptophyta</taxon>
        <taxon>Embryophyta</taxon>
        <taxon>Tracheophyta</taxon>
        <taxon>Spermatophyta</taxon>
        <taxon>Magnoliopsida</taxon>
        <taxon>eudicotyledons</taxon>
        <taxon>Gunneridae</taxon>
        <taxon>Pentapetalae</taxon>
        <taxon>asterids</taxon>
        <taxon>lamiids</taxon>
        <taxon>Lamiales</taxon>
        <taxon>Linderniaceae</taxon>
        <taxon>Craterostigma</taxon>
    </lineage>
</organism>
<reference key="1">
    <citation type="journal article" date="1990" name="Plant Physiol.">
        <title>Characterization of five abscisic acid-responsive cDNA clones isolated from the desiccation-tolerant plant Craterostigma plantagineum and their relationship to other water-stress genes.</title>
        <authorList>
            <person name="Piatkowski D."/>
            <person name="Schneider K."/>
            <person name="Salamini F."/>
            <person name="Bartels D."/>
        </authorList>
    </citation>
    <scope>NUCLEOTIDE SEQUENCE [MRNA]</scope>
    <source>
        <tissue>Leaf</tissue>
    </source>
</reference>
<protein>
    <recommendedName>
        <fullName>Desiccation-related protein PCC13-62</fullName>
    </recommendedName>
</protein>
<feature type="signal peptide" evidence="1">
    <location>
        <begin position="1"/>
        <end position="26"/>
    </location>
</feature>
<feature type="chain" id="PRO_0000017347" description="Desiccation-related protein PCC13-62">
    <location>
        <begin position="27"/>
        <end position="313"/>
    </location>
</feature>